<organism>
    <name type="scientific">Mycobacterium sp. (strain KMS)</name>
    <dbReference type="NCBI Taxonomy" id="189918"/>
    <lineage>
        <taxon>Bacteria</taxon>
        <taxon>Bacillati</taxon>
        <taxon>Actinomycetota</taxon>
        <taxon>Actinomycetes</taxon>
        <taxon>Mycobacteriales</taxon>
        <taxon>Mycobacteriaceae</taxon>
        <taxon>Mycobacterium</taxon>
    </lineage>
</organism>
<comment type="function">
    <text evidence="2">Cell wall formation.</text>
</comment>
<comment type="catalytic activity">
    <reaction evidence="2">
        <text>2 D-alanine + ATP = D-alanyl-D-alanine + ADP + phosphate + H(+)</text>
        <dbReference type="Rhea" id="RHEA:11224"/>
        <dbReference type="ChEBI" id="CHEBI:15378"/>
        <dbReference type="ChEBI" id="CHEBI:30616"/>
        <dbReference type="ChEBI" id="CHEBI:43474"/>
        <dbReference type="ChEBI" id="CHEBI:57416"/>
        <dbReference type="ChEBI" id="CHEBI:57822"/>
        <dbReference type="ChEBI" id="CHEBI:456216"/>
        <dbReference type="EC" id="6.3.2.4"/>
    </reaction>
</comment>
<comment type="cofactor">
    <cofactor evidence="1">
        <name>Mg(2+)</name>
        <dbReference type="ChEBI" id="CHEBI:18420"/>
    </cofactor>
    <cofactor evidence="1">
        <name>Mn(2+)</name>
        <dbReference type="ChEBI" id="CHEBI:29035"/>
    </cofactor>
    <text evidence="1">Binds 2 magnesium or manganese ions per subunit.</text>
</comment>
<comment type="pathway">
    <text evidence="2">Cell wall biogenesis; peptidoglycan biosynthesis.</text>
</comment>
<comment type="subcellular location">
    <subcellularLocation>
        <location evidence="2">Cytoplasm</location>
    </subcellularLocation>
</comment>
<comment type="similarity">
    <text evidence="2">Belongs to the D-alanine--D-alanine ligase family.</text>
</comment>
<accession>A1UEB6</accession>
<dbReference type="EC" id="6.3.2.4" evidence="2"/>
<dbReference type="EMBL" id="CP000518">
    <property type="protein sequence ID" value="ABL91174.1"/>
    <property type="molecule type" value="Genomic_DNA"/>
</dbReference>
<dbReference type="SMR" id="A1UEB6"/>
<dbReference type="STRING" id="189918.Mkms_1975"/>
<dbReference type="KEGG" id="mkm:Mkms_1975"/>
<dbReference type="HOGENOM" id="CLU_039268_0_1_11"/>
<dbReference type="OrthoDB" id="9813261at2"/>
<dbReference type="UniPathway" id="UPA00219"/>
<dbReference type="GO" id="GO:0005829">
    <property type="term" value="C:cytosol"/>
    <property type="evidence" value="ECO:0007669"/>
    <property type="project" value="TreeGrafter"/>
</dbReference>
<dbReference type="GO" id="GO:0005524">
    <property type="term" value="F:ATP binding"/>
    <property type="evidence" value="ECO:0007669"/>
    <property type="project" value="UniProtKB-KW"/>
</dbReference>
<dbReference type="GO" id="GO:0008716">
    <property type="term" value="F:D-alanine-D-alanine ligase activity"/>
    <property type="evidence" value="ECO:0007669"/>
    <property type="project" value="UniProtKB-UniRule"/>
</dbReference>
<dbReference type="GO" id="GO:0046872">
    <property type="term" value="F:metal ion binding"/>
    <property type="evidence" value="ECO:0007669"/>
    <property type="project" value="UniProtKB-KW"/>
</dbReference>
<dbReference type="GO" id="GO:0071555">
    <property type="term" value="P:cell wall organization"/>
    <property type="evidence" value="ECO:0007669"/>
    <property type="project" value="UniProtKB-KW"/>
</dbReference>
<dbReference type="GO" id="GO:0009252">
    <property type="term" value="P:peptidoglycan biosynthetic process"/>
    <property type="evidence" value="ECO:0007669"/>
    <property type="project" value="UniProtKB-UniRule"/>
</dbReference>
<dbReference type="GO" id="GO:0008360">
    <property type="term" value="P:regulation of cell shape"/>
    <property type="evidence" value="ECO:0007669"/>
    <property type="project" value="UniProtKB-KW"/>
</dbReference>
<dbReference type="FunFam" id="3.30.470.20:FF:000008">
    <property type="entry name" value="D-alanine--D-alanine ligase"/>
    <property type="match status" value="1"/>
</dbReference>
<dbReference type="Gene3D" id="3.40.50.20">
    <property type="match status" value="1"/>
</dbReference>
<dbReference type="Gene3D" id="3.30.1490.20">
    <property type="entry name" value="ATP-grasp fold, A domain"/>
    <property type="match status" value="1"/>
</dbReference>
<dbReference type="Gene3D" id="3.30.470.20">
    <property type="entry name" value="ATP-grasp fold, B domain"/>
    <property type="match status" value="1"/>
</dbReference>
<dbReference type="HAMAP" id="MF_00047">
    <property type="entry name" value="Dala_Dala_lig"/>
    <property type="match status" value="1"/>
</dbReference>
<dbReference type="InterPro" id="IPR011761">
    <property type="entry name" value="ATP-grasp"/>
</dbReference>
<dbReference type="InterPro" id="IPR013815">
    <property type="entry name" value="ATP_grasp_subdomain_1"/>
</dbReference>
<dbReference type="InterPro" id="IPR000291">
    <property type="entry name" value="D-Ala_lig_Van_CS"/>
</dbReference>
<dbReference type="InterPro" id="IPR005905">
    <property type="entry name" value="D_ala_D_ala"/>
</dbReference>
<dbReference type="InterPro" id="IPR011095">
    <property type="entry name" value="Dala_Dala_lig_C"/>
</dbReference>
<dbReference type="InterPro" id="IPR011127">
    <property type="entry name" value="Dala_Dala_lig_N"/>
</dbReference>
<dbReference type="InterPro" id="IPR016185">
    <property type="entry name" value="PreATP-grasp_dom_sf"/>
</dbReference>
<dbReference type="NCBIfam" id="TIGR01205">
    <property type="entry name" value="D_ala_D_alaTIGR"/>
    <property type="match status" value="1"/>
</dbReference>
<dbReference type="NCBIfam" id="NF002378">
    <property type="entry name" value="PRK01372.1"/>
    <property type="match status" value="1"/>
</dbReference>
<dbReference type="NCBIfam" id="NF002528">
    <property type="entry name" value="PRK01966.1-4"/>
    <property type="match status" value="1"/>
</dbReference>
<dbReference type="PANTHER" id="PTHR23132">
    <property type="entry name" value="D-ALANINE--D-ALANINE LIGASE"/>
    <property type="match status" value="1"/>
</dbReference>
<dbReference type="PANTHER" id="PTHR23132:SF25">
    <property type="entry name" value="D-ALANINE--D-ALANINE LIGASE A"/>
    <property type="match status" value="1"/>
</dbReference>
<dbReference type="Pfam" id="PF07478">
    <property type="entry name" value="Dala_Dala_lig_C"/>
    <property type="match status" value="1"/>
</dbReference>
<dbReference type="Pfam" id="PF01820">
    <property type="entry name" value="Dala_Dala_lig_N"/>
    <property type="match status" value="1"/>
</dbReference>
<dbReference type="PIRSF" id="PIRSF039102">
    <property type="entry name" value="Ddl/VanB"/>
    <property type="match status" value="1"/>
</dbReference>
<dbReference type="SUPFAM" id="SSF56059">
    <property type="entry name" value="Glutathione synthetase ATP-binding domain-like"/>
    <property type="match status" value="1"/>
</dbReference>
<dbReference type="SUPFAM" id="SSF52440">
    <property type="entry name" value="PreATP-grasp domain"/>
    <property type="match status" value="1"/>
</dbReference>
<dbReference type="PROSITE" id="PS50975">
    <property type="entry name" value="ATP_GRASP"/>
    <property type="match status" value="1"/>
</dbReference>
<dbReference type="PROSITE" id="PS00843">
    <property type="entry name" value="DALA_DALA_LIGASE_1"/>
    <property type="match status" value="1"/>
</dbReference>
<dbReference type="PROSITE" id="PS00844">
    <property type="entry name" value="DALA_DALA_LIGASE_2"/>
    <property type="match status" value="1"/>
</dbReference>
<protein>
    <recommendedName>
        <fullName evidence="2">D-alanine--D-alanine ligase</fullName>
        <ecNumber evidence="2">6.3.2.4</ecNumber>
    </recommendedName>
    <alternativeName>
        <fullName evidence="2">D-Ala-D-Ala ligase</fullName>
    </alternativeName>
    <alternativeName>
        <fullName evidence="2">D-alanylalanine synthetase</fullName>
    </alternativeName>
</protein>
<gene>
    <name evidence="2" type="primary">ddl</name>
    <name type="ordered locus">Mkms_1975</name>
</gene>
<feature type="chain" id="PRO_1000057326" description="D-alanine--D-alanine ligase">
    <location>
        <begin position="1"/>
        <end position="371"/>
    </location>
</feature>
<feature type="domain" description="ATP-grasp" evidence="2">
    <location>
        <begin position="154"/>
        <end position="361"/>
    </location>
</feature>
<feature type="binding site" evidence="2">
    <location>
        <begin position="182"/>
        <end position="237"/>
    </location>
    <ligand>
        <name>ATP</name>
        <dbReference type="ChEBI" id="CHEBI:30616"/>
    </ligand>
</feature>
<feature type="binding site" evidence="2">
    <location>
        <position position="316"/>
    </location>
    <ligand>
        <name>Mg(2+)</name>
        <dbReference type="ChEBI" id="CHEBI:18420"/>
        <label>1</label>
    </ligand>
</feature>
<feature type="binding site" evidence="2">
    <location>
        <position position="328"/>
    </location>
    <ligand>
        <name>Mg(2+)</name>
        <dbReference type="ChEBI" id="CHEBI:18420"/>
        <label>1</label>
    </ligand>
</feature>
<feature type="binding site" evidence="2">
    <location>
        <position position="328"/>
    </location>
    <ligand>
        <name>Mg(2+)</name>
        <dbReference type="ChEBI" id="CHEBI:18420"/>
        <label>2</label>
    </ligand>
</feature>
<feature type="binding site" evidence="2">
    <location>
        <position position="330"/>
    </location>
    <ligand>
        <name>Mg(2+)</name>
        <dbReference type="ChEBI" id="CHEBI:18420"/>
        <label>2</label>
    </ligand>
</feature>
<proteinExistence type="inferred from homology"/>
<name>DDL_MYCSK</name>
<keyword id="KW-0067">ATP-binding</keyword>
<keyword id="KW-0133">Cell shape</keyword>
<keyword id="KW-0961">Cell wall biogenesis/degradation</keyword>
<keyword id="KW-0963">Cytoplasm</keyword>
<keyword id="KW-0436">Ligase</keyword>
<keyword id="KW-0460">Magnesium</keyword>
<keyword id="KW-0464">Manganese</keyword>
<keyword id="KW-0479">Metal-binding</keyword>
<keyword id="KW-0547">Nucleotide-binding</keyword>
<keyword id="KW-0573">Peptidoglycan synthesis</keyword>
<reference key="1">
    <citation type="submission" date="2006-12" db="EMBL/GenBank/DDBJ databases">
        <title>Complete sequence of chromosome of Mycobacterium sp. KMS.</title>
        <authorList>
            <consortium name="US DOE Joint Genome Institute"/>
            <person name="Copeland A."/>
            <person name="Lucas S."/>
            <person name="Lapidus A."/>
            <person name="Barry K."/>
            <person name="Detter J.C."/>
            <person name="Glavina del Rio T."/>
            <person name="Hammon N."/>
            <person name="Israni S."/>
            <person name="Dalin E."/>
            <person name="Tice H."/>
            <person name="Pitluck S."/>
            <person name="Kiss H."/>
            <person name="Brettin T."/>
            <person name="Bruce D."/>
            <person name="Han C."/>
            <person name="Tapia R."/>
            <person name="Gilna P."/>
            <person name="Schmutz J."/>
            <person name="Larimer F."/>
            <person name="Land M."/>
            <person name="Hauser L."/>
            <person name="Kyrpides N."/>
            <person name="Mikhailova N."/>
            <person name="Miller C.D."/>
            <person name="Richardson P."/>
        </authorList>
    </citation>
    <scope>NUCLEOTIDE SEQUENCE [LARGE SCALE GENOMIC DNA]</scope>
    <source>
        <strain>KMS</strain>
    </source>
</reference>
<evidence type="ECO:0000250" key="1"/>
<evidence type="ECO:0000255" key="2">
    <source>
        <dbReference type="HAMAP-Rule" id="MF_00047"/>
    </source>
</evidence>
<sequence length="371" mass="39213">MIARNQRTRVAVVYGGRSSEHAISCVSAGSILRNLDPERFDVVAVGITPDGSWVLTDGRPETLAITDGRLPEVSAESGTALALPADPGRRGELVSLSPAAAGEVLAAVDVVFPVLHGPYGEDGTIQGLLELAGVPYVGAGVLASAAGMDKEFTKKLLVAEGLPVGDHVVLRPGRANVTLDERERLGLPVFVKPARGGSSIGVSRVSDWAELPAAIEAARRHDPKVIVEAGIAGRELECGVLEYPDGRVDASTIGEIRVAGVRGREDGFYDFATKYLDDGAELDVPAKVEDDVADEIRRLAIRAFRAIDCQGLARVDFFLTDDGPVVNEINTMPGFTTISMYPRMWAASGVDYPTLLAAMVDTAVARGTGLR</sequence>